<name>RL6_TOLAT</name>
<proteinExistence type="inferred from homology"/>
<evidence type="ECO:0000255" key="1">
    <source>
        <dbReference type="HAMAP-Rule" id="MF_01365"/>
    </source>
</evidence>
<evidence type="ECO:0000305" key="2"/>
<organism>
    <name type="scientific">Tolumonas auensis (strain DSM 9187 / NBRC 110442 / TA 4)</name>
    <dbReference type="NCBI Taxonomy" id="595494"/>
    <lineage>
        <taxon>Bacteria</taxon>
        <taxon>Pseudomonadati</taxon>
        <taxon>Pseudomonadota</taxon>
        <taxon>Gammaproteobacteria</taxon>
        <taxon>Aeromonadales</taxon>
        <taxon>Aeromonadaceae</taxon>
        <taxon>Tolumonas</taxon>
    </lineage>
</organism>
<dbReference type="EMBL" id="CP001616">
    <property type="protein sequence ID" value="ACQ91744.1"/>
    <property type="molecule type" value="Genomic_DNA"/>
</dbReference>
<dbReference type="RefSeq" id="WP_012728343.1">
    <property type="nucleotide sequence ID" value="NC_012691.1"/>
</dbReference>
<dbReference type="SMR" id="C4L7U5"/>
<dbReference type="STRING" id="595494.Tola_0114"/>
<dbReference type="KEGG" id="tau:Tola_0114"/>
<dbReference type="eggNOG" id="COG0097">
    <property type="taxonomic scope" value="Bacteria"/>
</dbReference>
<dbReference type="HOGENOM" id="CLU_065464_1_2_6"/>
<dbReference type="OrthoDB" id="9805007at2"/>
<dbReference type="Proteomes" id="UP000009073">
    <property type="component" value="Chromosome"/>
</dbReference>
<dbReference type="GO" id="GO:0022625">
    <property type="term" value="C:cytosolic large ribosomal subunit"/>
    <property type="evidence" value="ECO:0007669"/>
    <property type="project" value="TreeGrafter"/>
</dbReference>
<dbReference type="GO" id="GO:0019843">
    <property type="term" value="F:rRNA binding"/>
    <property type="evidence" value="ECO:0007669"/>
    <property type="project" value="UniProtKB-UniRule"/>
</dbReference>
<dbReference type="GO" id="GO:0003735">
    <property type="term" value="F:structural constituent of ribosome"/>
    <property type="evidence" value="ECO:0007669"/>
    <property type="project" value="InterPro"/>
</dbReference>
<dbReference type="GO" id="GO:0002181">
    <property type="term" value="P:cytoplasmic translation"/>
    <property type="evidence" value="ECO:0007669"/>
    <property type="project" value="TreeGrafter"/>
</dbReference>
<dbReference type="FunFam" id="3.90.930.12:FF:000001">
    <property type="entry name" value="50S ribosomal protein L6"/>
    <property type="match status" value="1"/>
</dbReference>
<dbReference type="FunFam" id="3.90.930.12:FF:000002">
    <property type="entry name" value="50S ribosomal protein L6"/>
    <property type="match status" value="1"/>
</dbReference>
<dbReference type="Gene3D" id="3.90.930.12">
    <property type="entry name" value="Ribosomal protein L6, alpha-beta domain"/>
    <property type="match status" value="2"/>
</dbReference>
<dbReference type="HAMAP" id="MF_01365_B">
    <property type="entry name" value="Ribosomal_uL6_B"/>
    <property type="match status" value="1"/>
</dbReference>
<dbReference type="InterPro" id="IPR000702">
    <property type="entry name" value="Ribosomal_uL6-like"/>
</dbReference>
<dbReference type="InterPro" id="IPR036789">
    <property type="entry name" value="Ribosomal_uL6-like_a/b-dom_sf"/>
</dbReference>
<dbReference type="InterPro" id="IPR020040">
    <property type="entry name" value="Ribosomal_uL6_a/b-dom"/>
</dbReference>
<dbReference type="InterPro" id="IPR019906">
    <property type="entry name" value="Ribosomal_uL6_bac-type"/>
</dbReference>
<dbReference type="InterPro" id="IPR002358">
    <property type="entry name" value="Ribosomal_uL6_CS"/>
</dbReference>
<dbReference type="NCBIfam" id="TIGR03654">
    <property type="entry name" value="L6_bact"/>
    <property type="match status" value="1"/>
</dbReference>
<dbReference type="PANTHER" id="PTHR11655">
    <property type="entry name" value="60S/50S RIBOSOMAL PROTEIN L6/L9"/>
    <property type="match status" value="1"/>
</dbReference>
<dbReference type="PANTHER" id="PTHR11655:SF14">
    <property type="entry name" value="LARGE RIBOSOMAL SUBUNIT PROTEIN UL6M"/>
    <property type="match status" value="1"/>
</dbReference>
<dbReference type="Pfam" id="PF00347">
    <property type="entry name" value="Ribosomal_L6"/>
    <property type="match status" value="2"/>
</dbReference>
<dbReference type="PIRSF" id="PIRSF002162">
    <property type="entry name" value="Ribosomal_L6"/>
    <property type="match status" value="1"/>
</dbReference>
<dbReference type="PRINTS" id="PR00059">
    <property type="entry name" value="RIBOSOMALL6"/>
</dbReference>
<dbReference type="SUPFAM" id="SSF56053">
    <property type="entry name" value="Ribosomal protein L6"/>
    <property type="match status" value="2"/>
</dbReference>
<dbReference type="PROSITE" id="PS00525">
    <property type="entry name" value="RIBOSOMAL_L6_1"/>
    <property type="match status" value="1"/>
</dbReference>
<protein>
    <recommendedName>
        <fullName evidence="1">Large ribosomal subunit protein uL6</fullName>
    </recommendedName>
    <alternativeName>
        <fullName evidence="2">50S ribosomal protein L6</fullName>
    </alternativeName>
</protein>
<comment type="function">
    <text evidence="1">This protein binds to the 23S rRNA, and is important in its secondary structure. It is located near the subunit interface in the base of the L7/L12 stalk, and near the tRNA binding site of the peptidyltransferase center.</text>
</comment>
<comment type="subunit">
    <text evidence="1">Part of the 50S ribosomal subunit.</text>
</comment>
<comment type="similarity">
    <text evidence="1">Belongs to the universal ribosomal protein uL6 family.</text>
</comment>
<keyword id="KW-1185">Reference proteome</keyword>
<keyword id="KW-0687">Ribonucleoprotein</keyword>
<keyword id="KW-0689">Ribosomal protein</keyword>
<keyword id="KW-0694">RNA-binding</keyword>
<keyword id="KW-0699">rRNA-binding</keyword>
<sequence>MSRVAKAPVTIPAGVEVTLNGQEIAVKGKNGTLKRILNAAVIVTKEENVLKFAPQEGVTGADAQAGTARALVNNMVIGVTTGFERKLVLVGVGYRAQAKGKSVGLALGFSHPIDHELPEGVTAECPTQTEIVLKSADKAMLGQVAADIRAYRSPEPYKGKGVRYSDEVVRTKEAKKK</sequence>
<feature type="chain" id="PRO_1000214940" description="Large ribosomal subunit protein uL6">
    <location>
        <begin position="1"/>
        <end position="177"/>
    </location>
</feature>
<reference key="1">
    <citation type="submission" date="2009-05" db="EMBL/GenBank/DDBJ databases">
        <title>Complete sequence of Tolumonas auensis DSM 9187.</title>
        <authorList>
            <consortium name="US DOE Joint Genome Institute"/>
            <person name="Lucas S."/>
            <person name="Copeland A."/>
            <person name="Lapidus A."/>
            <person name="Glavina del Rio T."/>
            <person name="Tice H."/>
            <person name="Bruce D."/>
            <person name="Goodwin L."/>
            <person name="Pitluck S."/>
            <person name="Chertkov O."/>
            <person name="Brettin T."/>
            <person name="Detter J.C."/>
            <person name="Han C."/>
            <person name="Larimer F."/>
            <person name="Land M."/>
            <person name="Hauser L."/>
            <person name="Kyrpides N."/>
            <person name="Mikhailova N."/>
            <person name="Spring S."/>
            <person name="Beller H."/>
        </authorList>
    </citation>
    <scope>NUCLEOTIDE SEQUENCE [LARGE SCALE GENOMIC DNA]</scope>
    <source>
        <strain>DSM 9187 / NBRC 110442 / TA 4</strain>
    </source>
</reference>
<gene>
    <name evidence="1" type="primary">rplF</name>
    <name type="ordered locus">Tola_0114</name>
</gene>
<accession>C4L7U5</accession>